<protein>
    <recommendedName>
        <fullName evidence="1">4-hydroxy-tetrahydrodipicolinate synthase</fullName>
        <shortName evidence="1">HTPA synthase</shortName>
        <ecNumber evidence="1">4.3.3.7</ecNumber>
    </recommendedName>
</protein>
<sequence>MRINHPLTGSIVALITPMFDDGSIDFGVLKSLVAFHIDSGTKAIVSMGTTGESATLNQDEHIEVIRATIEFANSRIPIIASTGANSTSEAIELTKAAKVIGADACLLVTPYYNRPTQEGLYQHYKLIAETVDIDQILYNVPSRTAVDLCVETVLRLSNIDNIIGIKDATGDLNVAKALIEQCADDFLFYSGDDATAVEFILMGGHGGISVTANITPKQVASAYQFALENDRELAESTNAPLADLHQHLFIESNPIPIKWAMFKMGKCNNGIRLPLMILSQQAQAMLEQDLSNLGII</sequence>
<name>DAPA_RUTMC</name>
<gene>
    <name evidence="1" type="primary">dapA</name>
    <name type="ordered locus">Rmag_0278</name>
</gene>
<evidence type="ECO:0000255" key="1">
    <source>
        <dbReference type="HAMAP-Rule" id="MF_00418"/>
    </source>
</evidence>
<evidence type="ECO:0000305" key="2"/>
<keyword id="KW-0028">Amino-acid biosynthesis</keyword>
<keyword id="KW-0963">Cytoplasm</keyword>
<keyword id="KW-0220">Diaminopimelate biosynthesis</keyword>
<keyword id="KW-0456">Lyase</keyword>
<keyword id="KW-0457">Lysine biosynthesis</keyword>
<keyword id="KW-0704">Schiff base</keyword>
<dbReference type="EC" id="4.3.3.7" evidence="1"/>
<dbReference type="EMBL" id="CP000488">
    <property type="protein sequence ID" value="ABL02060.1"/>
    <property type="molecule type" value="Genomic_DNA"/>
</dbReference>
<dbReference type="RefSeq" id="WP_011737685.1">
    <property type="nucleotide sequence ID" value="NC_008610.1"/>
</dbReference>
<dbReference type="SMR" id="A1AVV3"/>
<dbReference type="STRING" id="413404.Rmag_0278"/>
<dbReference type="KEGG" id="rma:Rmag_0278"/>
<dbReference type="eggNOG" id="COG0329">
    <property type="taxonomic scope" value="Bacteria"/>
</dbReference>
<dbReference type="HOGENOM" id="CLU_049343_7_1_6"/>
<dbReference type="OrthoDB" id="9782828at2"/>
<dbReference type="UniPathway" id="UPA00034">
    <property type="reaction ID" value="UER00017"/>
</dbReference>
<dbReference type="Proteomes" id="UP000002587">
    <property type="component" value="Chromosome"/>
</dbReference>
<dbReference type="GO" id="GO:0005829">
    <property type="term" value="C:cytosol"/>
    <property type="evidence" value="ECO:0007669"/>
    <property type="project" value="TreeGrafter"/>
</dbReference>
<dbReference type="GO" id="GO:0008840">
    <property type="term" value="F:4-hydroxy-tetrahydrodipicolinate synthase activity"/>
    <property type="evidence" value="ECO:0007669"/>
    <property type="project" value="UniProtKB-UniRule"/>
</dbReference>
<dbReference type="GO" id="GO:0019877">
    <property type="term" value="P:diaminopimelate biosynthetic process"/>
    <property type="evidence" value="ECO:0007669"/>
    <property type="project" value="UniProtKB-UniRule"/>
</dbReference>
<dbReference type="GO" id="GO:0009089">
    <property type="term" value="P:lysine biosynthetic process via diaminopimelate"/>
    <property type="evidence" value="ECO:0007669"/>
    <property type="project" value="UniProtKB-UniRule"/>
</dbReference>
<dbReference type="CDD" id="cd00950">
    <property type="entry name" value="DHDPS"/>
    <property type="match status" value="1"/>
</dbReference>
<dbReference type="Gene3D" id="3.20.20.70">
    <property type="entry name" value="Aldolase class I"/>
    <property type="match status" value="1"/>
</dbReference>
<dbReference type="HAMAP" id="MF_00418">
    <property type="entry name" value="DapA"/>
    <property type="match status" value="1"/>
</dbReference>
<dbReference type="InterPro" id="IPR013785">
    <property type="entry name" value="Aldolase_TIM"/>
</dbReference>
<dbReference type="InterPro" id="IPR005263">
    <property type="entry name" value="DapA"/>
</dbReference>
<dbReference type="InterPro" id="IPR002220">
    <property type="entry name" value="DapA-like"/>
</dbReference>
<dbReference type="InterPro" id="IPR020625">
    <property type="entry name" value="Schiff_base-form_aldolases_AS"/>
</dbReference>
<dbReference type="InterPro" id="IPR020624">
    <property type="entry name" value="Schiff_base-form_aldolases_CS"/>
</dbReference>
<dbReference type="NCBIfam" id="TIGR00674">
    <property type="entry name" value="dapA"/>
    <property type="match status" value="1"/>
</dbReference>
<dbReference type="PANTHER" id="PTHR12128:SF66">
    <property type="entry name" value="4-HYDROXY-2-OXOGLUTARATE ALDOLASE, MITOCHONDRIAL"/>
    <property type="match status" value="1"/>
</dbReference>
<dbReference type="PANTHER" id="PTHR12128">
    <property type="entry name" value="DIHYDRODIPICOLINATE SYNTHASE"/>
    <property type="match status" value="1"/>
</dbReference>
<dbReference type="Pfam" id="PF00701">
    <property type="entry name" value="DHDPS"/>
    <property type="match status" value="1"/>
</dbReference>
<dbReference type="PIRSF" id="PIRSF001365">
    <property type="entry name" value="DHDPS"/>
    <property type="match status" value="1"/>
</dbReference>
<dbReference type="PRINTS" id="PR00146">
    <property type="entry name" value="DHPICSNTHASE"/>
</dbReference>
<dbReference type="SMART" id="SM01130">
    <property type="entry name" value="DHDPS"/>
    <property type="match status" value="1"/>
</dbReference>
<dbReference type="SUPFAM" id="SSF51569">
    <property type="entry name" value="Aldolase"/>
    <property type="match status" value="1"/>
</dbReference>
<dbReference type="PROSITE" id="PS00665">
    <property type="entry name" value="DHDPS_1"/>
    <property type="match status" value="1"/>
</dbReference>
<dbReference type="PROSITE" id="PS00666">
    <property type="entry name" value="DHDPS_2"/>
    <property type="match status" value="1"/>
</dbReference>
<proteinExistence type="inferred from homology"/>
<feature type="chain" id="PRO_0000340985" description="4-hydroxy-tetrahydrodipicolinate synthase">
    <location>
        <begin position="1"/>
        <end position="296"/>
    </location>
</feature>
<feature type="active site" description="Proton donor/acceptor" evidence="1">
    <location>
        <position position="138"/>
    </location>
</feature>
<feature type="active site" description="Schiff-base intermediate with substrate" evidence="1">
    <location>
        <position position="166"/>
    </location>
</feature>
<feature type="binding site" evidence="1">
    <location>
        <position position="50"/>
    </location>
    <ligand>
        <name>pyruvate</name>
        <dbReference type="ChEBI" id="CHEBI:15361"/>
    </ligand>
</feature>
<feature type="binding site" evidence="1">
    <location>
        <position position="208"/>
    </location>
    <ligand>
        <name>pyruvate</name>
        <dbReference type="ChEBI" id="CHEBI:15361"/>
    </ligand>
</feature>
<feature type="site" description="Part of a proton relay during catalysis" evidence="1">
    <location>
        <position position="49"/>
    </location>
</feature>
<feature type="site" description="Part of a proton relay during catalysis" evidence="1">
    <location>
        <position position="112"/>
    </location>
</feature>
<comment type="function">
    <text evidence="1">Catalyzes the condensation of (S)-aspartate-beta-semialdehyde [(S)-ASA] and pyruvate to 4-hydroxy-tetrahydrodipicolinate (HTPA).</text>
</comment>
<comment type="catalytic activity">
    <reaction evidence="1">
        <text>L-aspartate 4-semialdehyde + pyruvate = (2S,4S)-4-hydroxy-2,3,4,5-tetrahydrodipicolinate + H2O + H(+)</text>
        <dbReference type="Rhea" id="RHEA:34171"/>
        <dbReference type="ChEBI" id="CHEBI:15361"/>
        <dbReference type="ChEBI" id="CHEBI:15377"/>
        <dbReference type="ChEBI" id="CHEBI:15378"/>
        <dbReference type="ChEBI" id="CHEBI:67139"/>
        <dbReference type="ChEBI" id="CHEBI:537519"/>
        <dbReference type="EC" id="4.3.3.7"/>
    </reaction>
</comment>
<comment type="pathway">
    <text evidence="1">Amino-acid biosynthesis; L-lysine biosynthesis via DAP pathway; (S)-tetrahydrodipicolinate from L-aspartate: step 3/4.</text>
</comment>
<comment type="subunit">
    <text evidence="1">Homotetramer; dimer of dimers.</text>
</comment>
<comment type="subcellular location">
    <subcellularLocation>
        <location evidence="1">Cytoplasm</location>
    </subcellularLocation>
</comment>
<comment type="similarity">
    <text evidence="1">Belongs to the DapA family.</text>
</comment>
<comment type="caution">
    <text evidence="2">Was originally thought to be a dihydrodipicolinate synthase (DHDPS), catalyzing the condensation of (S)-aspartate-beta-semialdehyde [(S)-ASA] and pyruvate to dihydrodipicolinate (DHDP). However, it was shown in E.coli that the product of the enzymatic reaction is not dihydrodipicolinate but in fact (4S)-4-hydroxy-2,3,4,5-tetrahydro-(2S)-dipicolinic acid (HTPA), and that the consecutive dehydration reaction leading to DHDP is not spontaneous but catalyzed by DapB.</text>
</comment>
<accession>A1AVV3</accession>
<organism>
    <name type="scientific">Ruthia magnifica subsp. Calyptogena magnifica</name>
    <dbReference type="NCBI Taxonomy" id="413404"/>
    <lineage>
        <taxon>Bacteria</taxon>
        <taxon>Pseudomonadati</taxon>
        <taxon>Pseudomonadota</taxon>
        <taxon>Gammaproteobacteria</taxon>
        <taxon>Candidatus Pseudothioglobaceae</taxon>
        <taxon>Candidatus Ruthturnera</taxon>
    </lineage>
</organism>
<reference key="1">
    <citation type="journal article" date="2007" name="Science">
        <title>The Calyptogena magnifica chemoautotrophic symbiont genome.</title>
        <authorList>
            <person name="Newton I.L.G."/>
            <person name="Woyke T."/>
            <person name="Auchtung T.A."/>
            <person name="Dilly G.F."/>
            <person name="Dutton R.J."/>
            <person name="Fisher M.C."/>
            <person name="Fontanez K.M."/>
            <person name="Lau E."/>
            <person name="Stewart F.J."/>
            <person name="Richardson P.M."/>
            <person name="Barry K.W."/>
            <person name="Saunders E."/>
            <person name="Detter J.C."/>
            <person name="Wu D."/>
            <person name="Eisen J.A."/>
            <person name="Cavanaugh C.M."/>
        </authorList>
    </citation>
    <scope>NUCLEOTIDE SEQUENCE [LARGE SCALE GENOMIC DNA]</scope>
</reference>